<gene>
    <name evidence="5" type="primary">yscG</name>
</gene>
<proteinExistence type="evidence at protein level"/>
<keyword id="KW-0963">Cytoplasm</keyword>
<keyword id="KW-0614">Plasmid</keyword>
<keyword id="KW-0843">Virulence</keyword>
<evidence type="ECO:0000250" key="1">
    <source>
        <dbReference type="UniProtKB" id="O68690"/>
    </source>
</evidence>
<evidence type="ECO:0000250" key="2">
    <source>
        <dbReference type="UniProtKB" id="P95435"/>
    </source>
</evidence>
<evidence type="ECO:0000269" key="3">
    <source>
    </source>
</evidence>
<evidence type="ECO:0000269" key="4">
    <source>
    </source>
</evidence>
<evidence type="ECO:0000303" key="5">
    <source>
    </source>
</evidence>
<evidence type="ECO:0000305" key="6"/>
<accession>Q01248</accession>
<comment type="function">
    <text evidence="1 2 4">Chaperone of the type III secretion system (T3SS), also called injectisome, which is used to inject bacterial effector proteins into eukaryotic host cells (By similarity). Along with YscE, prevents premature polymerization of the YscF/SctF needle protein within the cytoplasm (By similarity). Required for Yop secretion (PubMed:8709853).</text>
</comment>
<comment type="subunit">
    <text evidence="1">Component of the heterodimeric YscE-YscG chaperone (By similarity). The YscE-YscG chaperone forms a stable ternary complex with YscF/SctF (By similarity).</text>
</comment>
<comment type="subcellular location">
    <subcellularLocation>
        <location evidence="1">Cytoplasm</location>
    </subcellularLocation>
    <text evidence="1">Could be a peripheral membrane protein.</text>
</comment>
<comment type="induction">
    <text evidence="3">At 37 degrees Celsius in the absence of calcium (PubMed:1860816). Belongs to an operon involved in the translocation of Yop proteins across the bacterial membranes or in the specific control of this function (PubMed:1860816).</text>
</comment>
<comment type="disruption phenotype">
    <text evidence="4">The yscFG double mutant is unable to secrete the Yop proteins upon thermal induction in a Ca(2+)-deprived medium.</text>
</comment>
<comment type="similarity">
    <text evidence="6">Belongs to the YscG family.</text>
</comment>
<dbReference type="EMBL" id="M74011">
    <property type="protein sequence ID" value="AAC37024.1"/>
    <property type="molecule type" value="Genomic_DNA"/>
</dbReference>
<dbReference type="PIR" id="G40361">
    <property type="entry name" value="G40361"/>
</dbReference>
<dbReference type="RefSeq" id="WP_010891229.1">
    <property type="nucleotide sequence ID" value="NZ_KN150737.1"/>
</dbReference>
<dbReference type="SMR" id="Q01248"/>
<dbReference type="KEGG" id="yet:CH48_4196"/>
<dbReference type="GO" id="GO:0005737">
    <property type="term" value="C:cytoplasm"/>
    <property type="evidence" value="ECO:0007669"/>
    <property type="project" value="UniProtKB-SubCell"/>
</dbReference>
<dbReference type="Gene3D" id="1.25.40.10">
    <property type="entry name" value="Tetratricopeptide repeat domain"/>
    <property type="match status" value="1"/>
</dbReference>
<dbReference type="InterPro" id="IPR013348">
    <property type="entry name" value="T3SS_YscG_PscG"/>
</dbReference>
<dbReference type="InterPro" id="IPR011990">
    <property type="entry name" value="TPR-like_helical_dom_sf"/>
</dbReference>
<dbReference type="NCBIfam" id="TIGR02508">
    <property type="entry name" value="type_III_yscG"/>
    <property type="match status" value="1"/>
</dbReference>
<dbReference type="Pfam" id="PF09477">
    <property type="entry name" value="Type_III_YscG"/>
    <property type="match status" value="1"/>
</dbReference>
<sequence length="115" mass="12930">MKYKLNVLLAEIALIGTGNHCHEEANCIAEWLHLKGEEEAVQLIQLSSLMNRGDYASALQQGNKSTYPDLEPWLALCEYRLGLGNALESRLNRLATSQDPRIQTFVNGMKEQLKT</sequence>
<geneLocation type="plasmid">
    <name>pYV</name>
</geneLocation>
<reference key="1">
    <citation type="journal article" date="1991" name="J. Bacteriol.">
        <title>Analysis of virC, an operon involved in the secretion of Yop proteins by Yersinia enterocolitica.</title>
        <authorList>
            <person name="Michiels T."/>
            <person name="Vanooteghem J.-C."/>
            <person name="de Rouvroit C."/>
            <person name="China B."/>
            <person name="Gustin A."/>
            <person name="Boudry P."/>
            <person name="Cornelis G.R."/>
        </authorList>
    </citation>
    <scope>NUCLEOTIDE SEQUENCE [GENOMIC DNA]</scope>
    <scope>INDUCTION</scope>
    <scope>OPERON</scope>
    <source>
        <strain>439-80 / Serotype O:9</strain>
    </source>
</reference>
<reference key="2">
    <citation type="journal article" date="1995" name="Mol. Microbiol.">
        <title>Mutational analysis of the Yersinia enterocolitica virC operon: characterization of yscE, F, G, I, J, K required for Yop secretion and yscH encoding YopR.</title>
        <authorList>
            <person name="Allaoui A."/>
            <person name="Schulte R."/>
            <person name="Cornelis G.R."/>
        </authorList>
    </citation>
    <scope>FUNCTION IN YOP SECRETION</scope>
    <scope>DISRUPTION PHENOTYPE</scope>
    <source>
        <strain>W227 / Serotype O:9</strain>
    </source>
</reference>
<name>YSCG_YEREN</name>
<protein>
    <recommendedName>
        <fullName evidence="6">Type 3 secretion system chaperone YscG</fullName>
    </recommendedName>
    <alternativeName>
        <fullName evidence="6">Yersinia secretion component G</fullName>
    </alternativeName>
    <alternativeName>
        <fullName evidence="6">Yop proteins translocation protein G</fullName>
    </alternativeName>
</protein>
<feature type="chain" id="PRO_0000066482" description="Type 3 secretion system chaperone YscG">
    <location>
        <begin position="1"/>
        <end position="115"/>
    </location>
</feature>
<organism>
    <name type="scientific">Yersinia enterocolitica</name>
    <dbReference type="NCBI Taxonomy" id="630"/>
    <lineage>
        <taxon>Bacteria</taxon>
        <taxon>Pseudomonadati</taxon>
        <taxon>Pseudomonadota</taxon>
        <taxon>Gammaproteobacteria</taxon>
        <taxon>Enterobacterales</taxon>
        <taxon>Yersiniaceae</taxon>
        <taxon>Yersinia</taxon>
    </lineage>
</organism>